<accession>P9WFD1</accession>
<accession>L0TBA6</accession>
<accession>O53472</accession>
<accession>Q7D7L7</accession>
<gene>
    <name type="ordered locus">Rv2026c</name>
</gene>
<keyword id="KW-0067">ATP-binding</keyword>
<keyword id="KW-0547">Nucleotide-binding</keyword>
<keyword id="KW-1185">Reference proteome</keyword>
<evidence type="ECO:0000250" key="1">
    <source>
        <dbReference type="UniProtKB" id="P9WFD7"/>
    </source>
</evidence>
<evidence type="ECO:0000269" key="2">
    <source>
    </source>
</evidence>
<evidence type="ECO:0000305" key="3"/>
<comment type="induction">
    <text evidence="2">Constitutively expressed during exponential phase, normoxic and hypoxic stationary phase.</text>
</comment>
<comment type="disruption phenotype">
    <text evidence="2">No visible phenotype under normal or hypoxic and normoxic stationary phase growth.</text>
</comment>
<comment type="miscellaneous">
    <text>Was identified as a high-confidence drug target.</text>
</comment>
<comment type="similarity">
    <text evidence="3">Belongs to the universal stress protein A family.</text>
</comment>
<proteinExistence type="evidence at protein level"/>
<dbReference type="EMBL" id="AL123456">
    <property type="protein sequence ID" value="CCP44799.1"/>
    <property type="molecule type" value="Genomic_DNA"/>
</dbReference>
<dbReference type="PIR" id="A70942">
    <property type="entry name" value="A70942"/>
</dbReference>
<dbReference type="RefSeq" id="NP_216542.1">
    <property type="nucleotide sequence ID" value="NC_000962.3"/>
</dbReference>
<dbReference type="RefSeq" id="WP_003410150.1">
    <property type="nucleotide sequence ID" value="NZ_NVQJ01000046.1"/>
</dbReference>
<dbReference type="SMR" id="P9WFD1"/>
<dbReference type="FunCoup" id="P9WFD1">
    <property type="interactions" value="3"/>
</dbReference>
<dbReference type="STRING" id="83332.Rv2026c"/>
<dbReference type="PaxDb" id="83332-Rv2026c"/>
<dbReference type="DNASU" id="887460"/>
<dbReference type="GeneID" id="887460"/>
<dbReference type="KEGG" id="mtu:Rv2026c"/>
<dbReference type="KEGG" id="mtv:RVBD_2026c"/>
<dbReference type="TubercuList" id="Rv2026c"/>
<dbReference type="eggNOG" id="COG0589">
    <property type="taxonomic scope" value="Bacteria"/>
</dbReference>
<dbReference type="InParanoid" id="P9WFD1"/>
<dbReference type="OrthoDB" id="3174546at2"/>
<dbReference type="PhylomeDB" id="P9WFD1"/>
<dbReference type="Proteomes" id="UP000001584">
    <property type="component" value="Chromosome"/>
</dbReference>
<dbReference type="GO" id="GO:0005524">
    <property type="term" value="F:ATP binding"/>
    <property type="evidence" value="ECO:0007669"/>
    <property type="project" value="UniProtKB-KW"/>
</dbReference>
<dbReference type="CDD" id="cd23944">
    <property type="entry name" value="USP_Rv2623_repeat1"/>
    <property type="match status" value="1"/>
</dbReference>
<dbReference type="CDD" id="cd23661">
    <property type="entry name" value="USP_Rv2623_repeat2"/>
    <property type="match status" value="1"/>
</dbReference>
<dbReference type="Gene3D" id="3.40.50.620">
    <property type="entry name" value="HUPs"/>
    <property type="match status" value="2"/>
</dbReference>
<dbReference type="InterPro" id="IPR014729">
    <property type="entry name" value="Rossmann-like_a/b/a_fold"/>
</dbReference>
<dbReference type="InterPro" id="IPR006015">
    <property type="entry name" value="Universal_stress_UspA"/>
</dbReference>
<dbReference type="InterPro" id="IPR051688">
    <property type="entry name" value="USP_A"/>
</dbReference>
<dbReference type="InterPro" id="IPR006016">
    <property type="entry name" value="UspA"/>
</dbReference>
<dbReference type="PANTHER" id="PTHR43010">
    <property type="entry name" value="UNIVERSAL STRESS PROTEIN SLR1230"/>
    <property type="match status" value="1"/>
</dbReference>
<dbReference type="PANTHER" id="PTHR43010:SF1">
    <property type="entry name" value="USPA DOMAIN-CONTAINING PROTEIN"/>
    <property type="match status" value="1"/>
</dbReference>
<dbReference type="Pfam" id="PF00582">
    <property type="entry name" value="Usp"/>
    <property type="match status" value="2"/>
</dbReference>
<dbReference type="PRINTS" id="PR01438">
    <property type="entry name" value="UNVRSLSTRESS"/>
</dbReference>
<dbReference type="SUPFAM" id="SSF52402">
    <property type="entry name" value="Adenine nucleotide alpha hydrolases-like"/>
    <property type="match status" value="2"/>
</dbReference>
<reference key="1">
    <citation type="journal article" date="1998" name="Nature">
        <title>Deciphering the biology of Mycobacterium tuberculosis from the complete genome sequence.</title>
        <authorList>
            <person name="Cole S.T."/>
            <person name="Brosch R."/>
            <person name="Parkhill J."/>
            <person name="Garnier T."/>
            <person name="Churcher C.M."/>
            <person name="Harris D.E."/>
            <person name="Gordon S.V."/>
            <person name="Eiglmeier K."/>
            <person name="Gas S."/>
            <person name="Barry C.E. III"/>
            <person name="Tekaia F."/>
            <person name="Badcock K."/>
            <person name="Basham D."/>
            <person name="Brown D."/>
            <person name="Chillingworth T."/>
            <person name="Connor R."/>
            <person name="Davies R.M."/>
            <person name="Devlin K."/>
            <person name="Feltwell T."/>
            <person name="Gentles S."/>
            <person name="Hamlin N."/>
            <person name="Holroyd S."/>
            <person name="Hornsby T."/>
            <person name="Jagels K."/>
            <person name="Krogh A."/>
            <person name="McLean J."/>
            <person name="Moule S."/>
            <person name="Murphy L.D."/>
            <person name="Oliver S."/>
            <person name="Osborne J."/>
            <person name="Quail M.A."/>
            <person name="Rajandream M.A."/>
            <person name="Rogers J."/>
            <person name="Rutter S."/>
            <person name="Seeger K."/>
            <person name="Skelton S."/>
            <person name="Squares S."/>
            <person name="Squares R."/>
            <person name="Sulston J.E."/>
            <person name="Taylor K."/>
            <person name="Whitehead S."/>
            <person name="Barrell B.G."/>
        </authorList>
    </citation>
    <scope>NUCLEOTIDE SEQUENCE [LARGE SCALE GENOMIC DNA]</scope>
    <source>
        <strain>ATCC 25618 / H37Rv</strain>
    </source>
</reference>
<reference key="2">
    <citation type="journal article" date="2008" name="BMC Syst. Biol.">
        <title>targetTB: a target identification pipeline for Mycobacterium tuberculosis through an interactome, reactome and genome-scale structural analysis.</title>
        <authorList>
            <person name="Raman K."/>
            <person name="Yeturu K."/>
            <person name="Chandra N."/>
        </authorList>
    </citation>
    <scope>IDENTIFICATION AS A DRUG TARGET [LARGE SCALE ANALYSIS]</scope>
</reference>
<reference key="3">
    <citation type="journal article" date="2010" name="Tuberculosis">
        <title>Individual Mycobacterium tuberculosis universal stress protein homologues are dispensable in vitro.</title>
        <authorList>
            <person name="Hingley-Wilson S.M."/>
            <person name="Lougheed K.E."/>
            <person name="Ferguson K."/>
            <person name="Leiva S."/>
            <person name="Williams H.D."/>
        </authorList>
    </citation>
    <scope>INDUCTION</scope>
    <scope>DISRUPTION PHENOTYPE</scope>
    <source>
        <strain>ATCC 25618 / H37Rv</strain>
    </source>
</reference>
<reference key="4">
    <citation type="journal article" date="2011" name="Mol. Cell. Proteomics">
        <title>Proteogenomic analysis of Mycobacterium tuberculosis by high resolution mass spectrometry.</title>
        <authorList>
            <person name="Kelkar D.S."/>
            <person name="Kumar D."/>
            <person name="Kumar P."/>
            <person name="Balakrishnan L."/>
            <person name="Muthusamy B."/>
            <person name="Yadav A.K."/>
            <person name="Shrivastava P."/>
            <person name="Marimuthu A."/>
            <person name="Anand S."/>
            <person name="Sundaram H."/>
            <person name="Kingsbury R."/>
            <person name="Harsha H.C."/>
            <person name="Nair B."/>
            <person name="Prasad T.S."/>
            <person name="Chauhan D.S."/>
            <person name="Katoch K."/>
            <person name="Katoch V.M."/>
            <person name="Kumar P."/>
            <person name="Chaerkady R."/>
            <person name="Ramachandran S."/>
            <person name="Dash D."/>
            <person name="Pandey A."/>
        </authorList>
    </citation>
    <scope>IDENTIFICATION BY MASS SPECTROMETRY [LARGE SCALE ANALYSIS]</scope>
    <source>
        <strain>ATCC 25618 / H37Rv</strain>
    </source>
</reference>
<name>Y2026_MYCTU</name>
<organism>
    <name type="scientific">Mycobacterium tuberculosis (strain ATCC 25618 / H37Rv)</name>
    <dbReference type="NCBI Taxonomy" id="83332"/>
    <lineage>
        <taxon>Bacteria</taxon>
        <taxon>Bacillati</taxon>
        <taxon>Actinomycetota</taxon>
        <taxon>Actinomycetes</taxon>
        <taxon>Mycobacteriales</taxon>
        <taxon>Mycobacteriaceae</taxon>
        <taxon>Mycobacterium</taxon>
        <taxon>Mycobacterium tuberculosis complex</taxon>
    </lineage>
</organism>
<feature type="chain" id="PRO_0000396946" description="Universal stress protein Rv2026c">
    <location>
        <begin position="1"/>
        <end position="294"/>
    </location>
</feature>
<feature type="binding site" evidence="1">
    <location>
        <position position="13"/>
    </location>
    <ligand>
        <name>ATP</name>
        <dbReference type="ChEBI" id="CHEBI:30616"/>
        <label>1</label>
    </ligand>
</feature>
<feature type="binding site" evidence="1">
    <location>
        <begin position="117"/>
        <end position="123"/>
    </location>
    <ligand>
        <name>ATP</name>
        <dbReference type="ChEBI" id="CHEBI:30616"/>
        <label>1</label>
    </ligand>
</feature>
<feature type="binding site" evidence="1">
    <location>
        <begin position="131"/>
        <end position="132"/>
    </location>
    <ligand>
        <name>ATP</name>
        <dbReference type="ChEBI" id="CHEBI:30616"/>
        <label>1</label>
    </ligand>
</feature>
<feature type="binding site" evidence="1">
    <location>
        <position position="164"/>
    </location>
    <ligand>
        <name>ATP</name>
        <dbReference type="ChEBI" id="CHEBI:30616"/>
        <label>2</label>
    </ligand>
</feature>
<feature type="binding site" evidence="1">
    <location>
        <position position="197"/>
    </location>
    <ligand>
        <name>ATP</name>
        <dbReference type="ChEBI" id="CHEBI:30616"/>
        <label>2</label>
    </ligand>
</feature>
<feature type="binding site" evidence="1">
    <location>
        <begin position="261"/>
        <end position="267"/>
    </location>
    <ligand>
        <name>ATP</name>
        <dbReference type="ChEBI" id="CHEBI:30616"/>
        <label>2</label>
    </ligand>
</feature>
<feature type="binding site" evidence="1">
    <location>
        <begin position="275"/>
        <end position="277"/>
    </location>
    <ligand>
        <name>ATP</name>
        <dbReference type="ChEBI" id="CHEBI:30616"/>
        <label>2</label>
    </ligand>
</feature>
<sequence>MSAATAKYGILVGVDGSAQSNAAVAWAAREAVMRQLPITLLHIVAPVVVGWPVGQLYANMTEWQKDNAQQVIEQAREALTNSLGESKPPQVHTELVFSNVVPTLIDASQQAWLMVVGSQGMGALGRLLLGSISTALLHHARCPVAIIHSGNGATPDSDAPVLVGIDGSPASEAATALAFDEASRRRVDLVALHAWTDLGMFPVLGMDWREREKREAEVLAERLAGWQEQYPDVRVHRSLVCDKPARWLLEHSEQAQLVVVGSHGRGGFSGMLLGSVSSAVAHSVRIPVIVVRPS</sequence>
<protein>
    <recommendedName>
        <fullName>Universal stress protein Rv2026c</fullName>
        <shortName>USP Rv2026c</shortName>
    </recommendedName>
</protein>